<sequence length="1400" mass="152013">MKSSGPVERLLRALGRRDSSRATSRPRKAEPHSFREKVFRKKTPVCAVCKVTIDGTGVSCRVCKVATHRKCEAKVTSSCQALPPAELRRSTAPVRRIEHLGSTKSLNHSKQRSTLPRSFSLDPLMERRWDLDLTYVTERILAAAFPARPDEQRHRGHLRELAHVLQSKHRDKYLLFNLSEKRHDLTRLNPKVQDFGWPELHAPPLDKLCSICKAMETWLSADPQHVVVLYCKGSKGKLGVIVSAYMHYSKISAGADQALATLTMRKFCEDKVATELQPSQRRYVSYFSGLLSGSIRMNSSPLFLHYVFVPVLPAFEPNTGFQPFLKIYQSMQLVYTSGVYRIAGPGPQQLCISLEPALLLKGDVMVTCYHKGGQGTDRTLVFRVQFHTCTIHGSRLTFPKDQLDEAWADERFPFQASVEFVFSSSPEKVKGNTPRNDPSVSVDYNTTEPAVRWDSYENFNQHHEDSVDGALAHTRGPLDGSPYAQVQRVPRQTPPAPSPELPPPPMLSVSSDSGHSSTLTTEHTAESPGRPPPTAAERQELDRLLGGCGVASAGRGAGRETAILDDEEQPSVGGGLHLGMYSGHRPGLSRRCSCRQGFREPCGVPNGSYYRPEGTLERRRPPYGGYEGHPQGYAEASVEKRRLCRSLSEGPYPYAPELGKPANGDFGYRPAGYREVVILEDPGVPALCSCPACEEKLALPTAALYGLRLEREAAEGWSSEVGKPLLHPVRPGHPLPLLVPACGHHHAPMPDYGCLKPPKVGEEGHEGCSYAVCSEGRYGHSGYPALVTYGYGGAVPSYCPAYGRAPHSCGSPSEGRGYPSPGAHSPRAGSVSPGSPPYLQPRKLGYEISAEDGRDKYPLSGHLASTGPLASTESPEPSWRDGSSGHSTLPRSPRDPQCSASSELSGPSTPLHTSSPVQGKESNRRQDTTRSPSLAPTQRLSPGEALPSVVQGVAEKTPELLTSSRPEQLDPSPFSQTSAPGSPNGWPQERSPGGHTNSASPRSPVPTTLPGLRHAPWQGPRGTSDSPDGSPLTPVPTQMPWLVGSPEPPQSSPTPAFPLATSYDANGPIQPPLPEKRHLPGSGQQPSPPARSTNQHVTFASPLPDVTQPPEHPLQENQSNVKFVQDTSKFWYKPHLSRDQAIALLKDKDPGAFLIRDSHSFQGAYGLALKVATPPPSAQPWKGDPSEQLVRHFLIETGPKGVKIKGCPTEPYFGSLSALVSQHSISPISLPCCLRIPSKDPLEETPEAPVPTNMSTAADLLRQGAACSVLYLTSVETESLTGPQAVAKASSAALSCSPVPVPAIVHFKVSAQGITLTDNQRKLFFRRHYPVNSITFSSTDPQDRRWTNPDGATSKIFGFVAKKPGSPWENVCHLFAELDPDQPASAIVTFITKVLLGQRK</sequence>
<dbReference type="EC" id="3.1.3.48" evidence="1"/>
<dbReference type="EMBL" id="AF424789">
    <property type="protein sequence ID" value="AAN32753.1"/>
    <property type="molecule type" value="mRNA"/>
</dbReference>
<dbReference type="EMBL" id="BC025818">
    <property type="protein sequence ID" value="AAH25818.1"/>
    <property type="molecule type" value="mRNA"/>
</dbReference>
<dbReference type="EMBL" id="BC042190">
    <property type="protein sequence ID" value="AAH42190.1"/>
    <property type="molecule type" value="mRNA"/>
</dbReference>
<dbReference type="EMBL" id="AK147789">
    <property type="protein sequence ID" value="BAE28139.1"/>
    <property type="molecule type" value="mRNA"/>
</dbReference>
<dbReference type="EMBL" id="AK158009">
    <property type="protein sequence ID" value="BAE34316.1"/>
    <property type="status" value="ALT_FRAME"/>
    <property type="molecule type" value="mRNA"/>
</dbReference>
<dbReference type="CCDS" id="CCDS37224.1">
    <molecule id="Q8CGB6-1"/>
</dbReference>
<dbReference type="CCDS" id="CCDS88852.1">
    <molecule id="Q8CGB6-3"/>
</dbReference>
<dbReference type="RefSeq" id="NP_001342565.1">
    <molecule id="Q8CGB6-3"/>
    <property type="nucleotide sequence ID" value="NM_001355636.2"/>
</dbReference>
<dbReference type="RefSeq" id="NP_001403134.1">
    <molecule id="Q8CGB6-4"/>
    <property type="nucleotide sequence ID" value="NM_001416205.1"/>
</dbReference>
<dbReference type="RefSeq" id="NP_001403135.1">
    <molecule id="Q8CGB6-2"/>
    <property type="nucleotide sequence ID" value="NM_001416206.1"/>
</dbReference>
<dbReference type="RefSeq" id="NP_705761.2">
    <molecule id="Q8CGB6-1"/>
    <property type="nucleotide sequence ID" value="NM_153533.4"/>
</dbReference>
<dbReference type="RefSeq" id="XP_006520755.1">
    <property type="nucleotide sequence ID" value="XM_006520692.2"/>
</dbReference>
<dbReference type="RefSeq" id="XP_006520757.1">
    <property type="nucleotide sequence ID" value="XM_006520694.2"/>
</dbReference>
<dbReference type="RefSeq" id="XP_011243839.1">
    <property type="nucleotide sequence ID" value="XM_011245537.2"/>
</dbReference>
<dbReference type="BMRB" id="Q8CGB6"/>
<dbReference type="SMR" id="Q8CGB6"/>
<dbReference type="BioGRID" id="229043">
    <property type="interactions" value="2"/>
</dbReference>
<dbReference type="CORUM" id="Q8CGB6"/>
<dbReference type="FunCoup" id="Q8CGB6">
    <property type="interactions" value="100"/>
</dbReference>
<dbReference type="STRING" id="10090.ENSMUSP00000129146"/>
<dbReference type="GlyGen" id="Q8CGB6">
    <property type="glycosylation" value="5 sites, 1 O-linked glycan (3 sites)"/>
</dbReference>
<dbReference type="iPTMnet" id="Q8CGB6"/>
<dbReference type="PhosphoSitePlus" id="Q8CGB6"/>
<dbReference type="SwissPalm" id="Q8CGB6"/>
<dbReference type="jPOST" id="Q8CGB6"/>
<dbReference type="PaxDb" id="10090-ENSMUSP00000041087"/>
<dbReference type="PeptideAtlas" id="Q8CGB6"/>
<dbReference type="ProteomicsDB" id="259148">
    <molecule id="Q8CGB6-1"/>
</dbReference>
<dbReference type="ProteomicsDB" id="259149">
    <molecule id="Q8CGB6-2"/>
</dbReference>
<dbReference type="ProteomicsDB" id="259150">
    <molecule id="Q8CGB6-3"/>
</dbReference>
<dbReference type="ProteomicsDB" id="259151">
    <molecule id="Q8CGB6-4"/>
</dbReference>
<dbReference type="Pumba" id="Q8CGB6"/>
<dbReference type="Antibodypedia" id="26823">
    <property type="antibodies" value="84 antibodies from 23 providers"/>
</dbReference>
<dbReference type="DNASU" id="209039"/>
<dbReference type="Ensembl" id="ENSMUST00000046144.10">
    <molecule id="Q8CGB6-3"/>
    <property type="protein sequence ID" value="ENSMUSP00000041087.10"/>
    <property type="gene ID" value="ENSMUSG00000037003.17"/>
</dbReference>
<dbReference type="Ensembl" id="ENSMUST00000169627.9">
    <molecule id="Q8CGB6-1"/>
    <property type="protein sequence ID" value="ENSMUSP00000129146.2"/>
    <property type="gene ID" value="ENSMUSG00000037003.17"/>
</dbReference>
<dbReference type="Ensembl" id="ENSMUST00000228958.2">
    <molecule id="Q8CGB6-4"/>
    <property type="protein sequence ID" value="ENSMUSP00000155830.2"/>
    <property type="gene ID" value="ENSMUSG00000037003.17"/>
</dbReference>
<dbReference type="GeneID" id="209039"/>
<dbReference type="KEGG" id="mmu:209039"/>
<dbReference type="UCSC" id="uc007xum.1">
    <molecule id="Q8CGB6-4"/>
    <property type="organism name" value="mouse"/>
</dbReference>
<dbReference type="UCSC" id="uc007xun.1">
    <molecule id="Q8CGB6-2"/>
    <property type="organism name" value="mouse"/>
</dbReference>
<dbReference type="UCSC" id="uc007xuo.1">
    <molecule id="Q8CGB6-1"/>
    <property type="organism name" value="mouse"/>
</dbReference>
<dbReference type="UCSC" id="uc011zzx.1">
    <molecule id="Q8CGB6-3"/>
    <property type="organism name" value="mouse"/>
</dbReference>
<dbReference type="AGR" id="MGI:2387586"/>
<dbReference type="CTD" id="23371"/>
<dbReference type="MGI" id="MGI:2387586">
    <property type="gene designation" value="Tns2"/>
</dbReference>
<dbReference type="VEuPathDB" id="HostDB:ENSMUSG00000037003"/>
<dbReference type="eggNOG" id="KOG1930">
    <property type="taxonomic scope" value="Eukaryota"/>
</dbReference>
<dbReference type="eggNOG" id="KOG2283">
    <property type="taxonomic scope" value="Eukaryota"/>
</dbReference>
<dbReference type="GeneTree" id="ENSGT00940000161535"/>
<dbReference type="HOGENOM" id="CLU_002189_0_0_1"/>
<dbReference type="InParanoid" id="Q8CGB6"/>
<dbReference type="OMA" id="IVQREEM"/>
<dbReference type="PhylomeDB" id="Q8CGB6"/>
<dbReference type="TreeFam" id="TF315996"/>
<dbReference type="BioGRID-ORCS" id="209039">
    <property type="hits" value="6 hits in 79 CRISPR screens"/>
</dbReference>
<dbReference type="ChiTaRS" id="Tns2">
    <property type="organism name" value="mouse"/>
</dbReference>
<dbReference type="PRO" id="PR:Q8CGB6"/>
<dbReference type="Proteomes" id="UP000000589">
    <property type="component" value="Chromosome 15"/>
</dbReference>
<dbReference type="RNAct" id="Q8CGB6">
    <property type="molecule type" value="protein"/>
</dbReference>
<dbReference type="Bgee" id="ENSMUSG00000037003">
    <property type="expression patterns" value="Expressed in ankle joint and 222 other cell types or tissues"/>
</dbReference>
<dbReference type="ExpressionAtlas" id="Q8CGB6">
    <property type="expression patterns" value="baseline and differential"/>
</dbReference>
<dbReference type="GO" id="GO:0005737">
    <property type="term" value="C:cytoplasm"/>
    <property type="evidence" value="ECO:0007669"/>
    <property type="project" value="UniProtKB-SubCell"/>
</dbReference>
<dbReference type="GO" id="GO:0005925">
    <property type="term" value="C:focal adhesion"/>
    <property type="evidence" value="ECO:0000250"/>
    <property type="project" value="UniProtKB"/>
</dbReference>
<dbReference type="GO" id="GO:0005886">
    <property type="term" value="C:plasma membrane"/>
    <property type="evidence" value="ECO:0007669"/>
    <property type="project" value="UniProtKB-SubCell"/>
</dbReference>
<dbReference type="GO" id="GO:0042802">
    <property type="term" value="F:identical protein binding"/>
    <property type="evidence" value="ECO:0007669"/>
    <property type="project" value="Ensembl"/>
</dbReference>
<dbReference type="GO" id="GO:0008289">
    <property type="term" value="F:lipid binding"/>
    <property type="evidence" value="ECO:0007669"/>
    <property type="project" value="UniProtKB-KW"/>
</dbReference>
<dbReference type="GO" id="GO:0019901">
    <property type="term" value="F:protein kinase binding"/>
    <property type="evidence" value="ECO:0000266"/>
    <property type="project" value="MGI"/>
</dbReference>
<dbReference type="GO" id="GO:0004725">
    <property type="term" value="F:protein tyrosine phosphatase activity"/>
    <property type="evidence" value="ECO:0000250"/>
    <property type="project" value="UniProtKB"/>
</dbReference>
<dbReference type="GO" id="GO:0005102">
    <property type="term" value="F:signaling receptor binding"/>
    <property type="evidence" value="ECO:0000266"/>
    <property type="project" value="MGI"/>
</dbReference>
<dbReference type="GO" id="GO:0008270">
    <property type="term" value="F:zinc ion binding"/>
    <property type="evidence" value="ECO:0007669"/>
    <property type="project" value="UniProtKB-KW"/>
</dbReference>
<dbReference type="GO" id="GO:0019725">
    <property type="term" value="P:cellular homeostasis"/>
    <property type="evidence" value="ECO:0000315"/>
    <property type="project" value="MGI"/>
</dbReference>
<dbReference type="GO" id="GO:0032963">
    <property type="term" value="P:collagen metabolic process"/>
    <property type="evidence" value="ECO:0000315"/>
    <property type="project" value="MGI"/>
</dbReference>
<dbReference type="GO" id="GO:0001822">
    <property type="term" value="P:kidney development"/>
    <property type="evidence" value="ECO:0000315"/>
    <property type="project" value="MGI"/>
</dbReference>
<dbReference type="GO" id="GO:0035264">
    <property type="term" value="P:multicellular organism growth"/>
    <property type="evidence" value="ECO:0000315"/>
    <property type="project" value="MGI"/>
</dbReference>
<dbReference type="GO" id="GO:0048871">
    <property type="term" value="P:multicellular organismal-level homeostasis"/>
    <property type="evidence" value="ECO:0000315"/>
    <property type="project" value="MGI"/>
</dbReference>
<dbReference type="GO" id="GO:0008285">
    <property type="term" value="P:negative regulation of cell population proliferation"/>
    <property type="evidence" value="ECO:0007669"/>
    <property type="project" value="Ensembl"/>
</dbReference>
<dbReference type="GO" id="GO:0046627">
    <property type="term" value="P:negative regulation of insulin receptor signaling pathway"/>
    <property type="evidence" value="ECO:0000250"/>
    <property type="project" value="UniProtKB"/>
</dbReference>
<dbReference type="GO" id="GO:0035335">
    <property type="term" value="P:peptidyl-tyrosine dephosphorylation"/>
    <property type="evidence" value="ECO:0000250"/>
    <property type="project" value="UniProtKB"/>
</dbReference>
<dbReference type="GO" id="GO:0014850">
    <property type="term" value="P:response to muscle activity"/>
    <property type="evidence" value="ECO:0000315"/>
    <property type="project" value="MGI"/>
</dbReference>
<dbReference type="CDD" id="cd20887">
    <property type="entry name" value="C1_TNS2"/>
    <property type="match status" value="1"/>
</dbReference>
<dbReference type="CDD" id="cd01213">
    <property type="entry name" value="PTB_tensin"/>
    <property type="match status" value="1"/>
</dbReference>
<dbReference type="CDD" id="cd09927">
    <property type="entry name" value="SH2_Tensin_like"/>
    <property type="match status" value="1"/>
</dbReference>
<dbReference type="FunFam" id="2.30.29.30:FF:000039">
    <property type="entry name" value="Tensin 1"/>
    <property type="match status" value="1"/>
</dbReference>
<dbReference type="FunFam" id="3.30.505.10:FF:000002">
    <property type="entry name" value="Tensin 1"/>
    <property type="match status" value="1"/>
</dbReference>
<dbReference type="FunFam" id="3.30.60.20:FF:000059">
    <property type="entry name" value="Tensin 2"/>
    <property type="match status" value="1"/>
</dbReference>
<dbReference type="FunFam" id="3.90.190.10:FF:000010">
    <property type="entry name" value="tensin-1 isoform X2"/>
    <property type="match status" value="1"/>
</dbReference>
<dbReference type="Gene3D" id="2.60.40.1110">
    <property type="match status" value="1"/>
</dbReference>
<dbReference type="Gene3D" id="3.30.60.20">
    <property type="match status" value="1"/>
</dbReference>
<dbReference type="Gene3D" id="2.30.29.30">
    <property type="entry name" value="Pleckstrin-homology domain (PH domain)/Phosphotyrosine-binding domain (PTB)"/>
    <property type="match status" value="1"/>
</dbReference>
<dbReference type="Gene3D" id="3.90.190.10">
    <property type="entry name" value="Protein tyrosine phosphatase superfamily"/>
    <property type="match status" value="1"/>
</dbReference>
<dbReference type="Gene3D" id="3.30.505.10">
    <property type="entry name" value="SH2 domain"/>
    <property type="match status" value="1"/>
</dbReference>
<dbReference type="InterPro" id="IPR046349">
    <property type="entry name" value="C1-like_sf"/>
</dbReference>
<dbReference type="InterPro" id="IPR035892">
    <property type="entry name" value="C2_domain_sf"/>
</dbReference>
<dbReference type="InterPro" id="IPR002219">
    <property type="entry name" value="PE/DAG-bd"/>
</dbReference>
<dbReference type="InterPro" id="IPR011993">
    <property type="entry name" value="PH-like_dom_sf"/>
</dbReference>
<dbReference type="InterPro" id="IPR029021">
    <property type="entry name" value="Prot-tyrosine_phosphatase-like"/>
</dbReference>
<dbReference type="InterPro" id="IPR013625">
    <property type="entry name" value="PTB"/>
</dbReference>
<dbReference type="InterPro" id="IPR006020">
    <property type="entry name" value="PTB/PI_dom"/>
</dbReference>
<dbReference type="InterPro" id="IPR000980">
    <property type="entry name" value="SH2"/>
</dbReference>
<dbReference type="InterPro" id="IPR036860">
    <property type="entry name" value="SH2_dom_sf"/>
</dbReference>
<dbReference type="InterPro" id="IPR035012">
    <property type="entry name" value="Tensin-like_SH2"/>
</dbReference>
<dbReference type="InterPro" id="IPR014020">
    <property type="entry name" value="Tensin_C2-dom"/>
</dbReference>
<dbReference type="InterPro" id="IPR029023">
    <property type="entry name" value="Tensin_phosphatase"/>
</dbReference>
<dbReference type="InterPro" id="IPR033929">
    <property type="entry name" value="Tensin_PTB"/>
</dbReference>
<dbReference type="InterPro" id="IPR051484">
    <property type="entry name" value="Tensin_PTEN_phosphatase"/>
</dbReference>
<dbReference type="PANTHER" id="PTHR45734">
    <property type="entry name" value="TENSIN"/>
    <property type="match status" value="1"/>
</dbReference>
<dbReference type="PANTHER" id="PTHR45734:SF1">
    <property type="entry name" value="TENSIN-2"/>
    <property type="match status" value="1"/>
</dbReference>
<dbReference type="Pfam" id="PF00130">
    <property type="entry name" value="C1_1"/>
    <property type="match status" value="1"/>
</dbReference>
<dbReference type="Pfam" id="PF08416">
    <property type="entry name" value="PTB"/>
    <property type="match status" value="1"/>
</dbReference>
<dbReference type="Pfam" id="PF10409">
    <property type="entry name" value="PTEN_C2"/>
    <property type="match status" value="1"/>
</dbReference>
<dbReference type="Pfam" id="PF00017">
    <property type="entry name" value="SH2"/>
    <property type="match status" value="1"/>
</dbReference>
<dbReference type="SMART" id="SM00109">
    <property type="entry name" value="C1"/>
    <property type="match status" value="1"/>
</dbReference>
<dbReference type="SMART" id="SM00462">
    <property type="entry name" value="PTB"/>
    <property type="match status" value="1"/>
</dbReference>
<dbReference type="SMART" id="SM01326">
    <property type="entry name" value="PTEN_C2"/>
    <property type="match status" value="1"/>
</dbReference>
<dbReference type="SMART" id="SM00252">
    <property type="entry name" value="SH2"/>
    <property type="match status" value="1"/>
</dbReference>
<dbReference type="SUPFAM" id="SSF52799">
    <property type="entry name" value="(Phosphotyrosine protein) phosphatases II"/>
    <property type="match status" value="1"/>
</dbReference>
<dbReference type="SUPFAM" id="SSF49562">
    <property type="entry name" value="C2 domain (Calcium/lipid-binding domain, CaLB)"/>
    <property type="match status" value="1"/>
</dbReference>
<dbReference type="SUPFAM" id="SSF57889">
    <property type="entry name" value="Cysteine-rich domain"/>
    <property type="match status" value="1"/>
</dbReference>
<dbReference type="SUPFAM" id="SSF50729">
    <property type="entry name" value="PH domain-like"/>
    <property type="match status" value="1"/>
</dbReference>
<dbReference type="SUPFAM" id="SSF55550">
    <property type="entry name" value="SH2 domain"/>
    <property type="match status" value="1"/>
</dbReference>
<dbReference type="PROSITE" id="PS51182">
    <property type="entry name" value="C2_TENSIN"/>
    <property type="match status" value="1"/>
</dbReference>
<dbReference type="PROSITE" id="PS51181">
    <property type="entry name" value="PPASE_TENSIN"/>
    <property type="match status" value="1"/>
</dbReference>
<dbReference type="PROSITE" id="PS50001">
    <property type="entry name" value="SH2"/>
    <property type="match status" value="1"/>
</dbReference>
<dbReference type="PROSITE" id="PS00479">
    <property type="entry name" value="ZF_DAG_PE_1"/>
    <property type="match status" value="1"/>
</dbReference>
<dbReference type="PROSITE" id="PS50081">
    <property type="entry name" value="ZF_DAG_PE_2"/>
    <property type="match status" value="1"/>
</dbReference>
<reference key="1">
    <citation type="submission" date="2001-09" db="EMBL/GenBank/DDBJ databases">
        <title>Molecular cloning and characterization of mouse tensin 2.</title>
        <authorList>
            <person name="Lo S.H."/>
        </authorList>
    </citation>
    <scope>NUCLEOTIDE SEQUENCE [MRNA] (ISOFORM 2)</scope>
</reference>
<reference key="2">
    <citation type="journal article" date="2004" name="Genome Res.">
        <title>The status, quality, and expansion of the NIH full-length cDNA project: the Mammalian Gene Collection (MGC).</title>
        <authorList>
            <consortium name="The MGC Project Team"/>
        </authorList>
    </citation>
    <scope>NUCLEOTIDE SEQUENCE [LARGE SCALE MRNA] (ISOFORM 1)</scope>
    <scope>NUCLEOTIDE SEQUENCE [LARGE SCALE MRNA] OF 753-1400 (ISOFORM 3)</scope>
    <source>
        <strain>FVB/N</strain>
        <tissue>Liver</tissue>
        <tissue>Salivary gland</tissue>
    </source>
</reference>
<reference key="3">
    <citation type="journal article" date="2005" name="Science">
        <title>The transcriptional landscape of the mammalian genome.</title>
        <authorList>
            <person name="Carninci P."/>
            <person name="Kasukawa T."/>
            <person name="Katayama S."/>
            <person name="Gough J."/>
            <person name="Frith M.C."/>
            <person name="Maeda N."/>
            <person name="Oyama R."/>
            <person name="Ravasi T."/>
            <person name="Lenhard B."/>
            <person name="Wells C."/>
            <person name="Kodzius R."/>
            <person name="Shimokawa K."/>
            <person name="Bajic V.B."/>
            <person name="Brenner S.E."/>
            <person name="Batalov S."/>
            <person name="Forrest A.R."/>
            <person name="Zavolan M."/>
            <person name="Davis M.J."/>
            <person name="Wilming L.G."/>
            <person name="Aidinis V."/>
            <person name="Allen J.E."/>
            <person name="Ambesi-Impiombato A."/>
            <person name="Apweiler R."/>
            <person name="Aturaliya R.N."/>
            <person name="Bailey T.L."/>
            <person name="Bansal M."/>
            <person name="Baxter L."/>
            <person name="Beisel K.W."/>
            <person name="Bersano T."/>
            <person name="Bono H."/>
            <person name="Chalk A.M."/>
            <person name="Chiu K.P."/>
            <person name="Choudhary V."/>
            <person name="Christoffels A."/>
            <person name="Clutterbuck D.R."/>
            <person name="Crowe M.L."/>
            <person name="Dalla E."/>
            <person name="Dalrymple B.P."/>
            <person name="de Bono B."/>
            <person name="Della Gatta G."/>
            <person name="di Bernardo D."/>
            <person name="Down T."/>
            <person name="Engstrom P."/>
            <person name="Fagiolini M."/>
            <person name="Faulkner G."/>
            <person name="Fletcher C.F."/>
            <person name="Fukushima T."/>
            <person name="Furuno M."/>
            <person name="Futaki S."/>
            <person name="Gariboldi M."/>
            <person name="Georgii-Hemming P."/>
            <person name="Gingeras T.R."/>
            <person name="Gojobori T."/>
            <person name="Green R.E."/>
            <person name="Gustincich S."/>
            <person name="Harbers M."/>
            <person name="Hayashi Y."/>
            <person name="Hensch T.K."/>
            <person name="Hirokawa N."/>
            <person name="Hill D."/>
            <person name="Huminiecki L."/>
            <person name="Iacono M."/>
            <person name="Ikeo K."/>
            <person name="Iwama A."/>
            <person name="Ishikawa T."/>
            <person name="Jakt M."/>
            <person name="Kanapin A."/>
            <person name="Katoh M."/>
            <person name="Kawasawa Y."/>
            <person name="Kelso J."/>
            <person name="Kitamura H."/>
            <person name="Kitano H."/>
            <person name="Kollias G."/>
            <person name="Krishnan S.P."/>
            <person name="Kruger A."/>
            <person name="Kummerfeld S.K."/>
            <person name="Kurochkin I.V."/>
            <person name="Lareau L.F."/>
            <person name="Lazarevic D."/>
            <person name="Lipovich L."/>
            <person name="Liu J."/>
            <person name="Liuni S."/>
            <person name="McWilliam S."/>
            <person name="Madan Babu M."/>
            <person name="Madera M."/>
            <person name="Marchionni L."/>
            <person name="Matsuda H."/>
            <person name="Matsuzawa S."/>
            <person name="Miki H."/>
            <person name="Mignone F."/>
            <person name="Miyake S."/>
            <person name="Morris K."/>
            <person name="Mottagui-Tabar S."/>
            <person name="Mulder N."/>
            <person name="Nakano N."/>
            <person name="Nakauchi H."/>
            <person name="Ng P."/>
            <person name="Nilsson R."/>
            <person name="Nishiguchi S."/>
            <person name="Nishikawa S."/>
            <person name="Nori F."/>
            <person name="Ohara O."/>
            <person name="Okazaki Y."/>
            <person name="Orlando V."/>
            <person name="Pang K.C."/>
            <person name="Pavan W.J."/>
            <person name="Pavesi G."/>
            <person name="Pesole G."/>
            <person name="Petrovsky N."/>
            <person name="Piazza S."/>
            <person name="Reed J."/>
            <person name="Reid J.F."/>
            <person name="Ring B.Z."/>
            <person name="Ringwald M."/>
            <person name="Rost B."/>
            <person name="Ruan Y."/>
            <person name="Salzberg S.L."/>
            <person name="Sandelin A."/>
            <person name="Schneider C."/>
            <person name="Schoenbach C."/>
            <person name="Sekiguchi K."/>
            <person name="Semple C.A."/>
            <person name="Seno S."/>
            <person name="Sessa L."/>
            <person name="Sheng Y."/>
            <person name="Shibata Y."/>
            <person name="Shimada H."/>
            <person name="Shimada K."/>
            <person name="Silva D."/>
            <person name="Sinclair B."/>
            <person name="Sperling S."/>
            <person name="Stupka E."/>
            <person name="Sugiura K."/>
            <person name="Sultana R."/>
            <person name="Takenaka Y."/>
            <person name="Taki K."/>
            <person name="Tammoja K."/>
            <person name="Tan S.L."/>
            <person name="Tang S."/>
            <person name="Taylor M.S."/>
            <person name="Tegner J."/>
            <person name="Teichmann S.A."/>
            <person name="Ueda H.R."/>
            <person name="van Nimwegen E."/>
            <person name="Verardo R."/>
            <person name="Wei C.L."/>
            <person name="Yagi K."/>
            <person name="Yamanishi H."/>
            <person name="Zabarovsky E."/>
            <person name="Zhu S."/>
            <person name="Zimmer A."/>
            <person name="Hide W."/>
            <person name="Bult C."/>
            <person name="Grimmond S.M."/>
            <person name="Teasdale R.D."/>
            <person name="Liu E.T."/>
            <person name="Brusic V."/>
            <person name="Quackenbush J."/>
            <person name="Wahlestedt C."/>
            <person name="Mattick J.S."/>
            <person name="Hume D.A."/>
            <person name="Kai C."/>
            <person name="Sasaki D."/>
            <person name="Tomaru Y."/>
            <person name="Fukuda S."/>
            <person name="Kanamori-Katayama M."/>
            <person name="Suzuki M."/>
            <person name="Aoki J."/>
            <person name="Arakawa T."/>
            <person name="Iida J."/>
            <person name="Imamura K."/>
            <person name="Itoh M."/>
            <person name="Kato T."/>
            <person name="Kawaji H."/>
            <person name="Kawagashira N."/>
            <person name="Kawashima T."/>
            <person name="Kojima M."/>
            <person name="Kondo S."/>
            <person name="Konno H."/>
            <person name="Nakano K."/>
            <person name="Ninomiya N."/>
            <person name="Nishio T."/>
            <person name="Okada M."/>
            <person name="Plessy C."/>
            <person name="Shibata K."/>
            <person name="Shiraki T."/>
            <person name="Suzuki S."/>
            <person name="Tagami M."/>
            <person name="Waki K."/>
            <person name="Watahiki A."/>
            <person name="Okamura-Oho Y."/>
            <person name="Suzuki H."/>
            <person name="Kawai J."/>
            <person name="Hayashizaki Y."/>
        </authorList>
    </citation>
    <scope>NUCLEOTIDE SEQUENCE [LARGE SCALE MRNA] OF 1-935 (ISOFORM 4)</scope>
    <scope>NUCLEOTIDE SEQUENCE [LARGE SCALE MRNA] OF 1-875 (ISOFORM 1)</scope>
    <source>
        <strain>C57BL/6J</strain>
        <tissue>Inner ear</tissue>
        <tissue>Melanocyte</tissue>
    </source>
</reference>
<reference key="4">
    <citation type="journal article" date="2005" name="Nat. Biotechnol.">
        <title>Immunoaffinity profiling of tyrosine phosphorylation in cancer cells.</title>
        <authorList>
            <person name="Rush J."/>
            <person name="Moritz A."/>
            <person name="Lee K.A."/>
            <person name="Guo A."/>
            <person name="Goss V.L."/>
            <person name="Spek E.J."/>
            <person name="Zhang H."/>
            <person name="Zha X.-M."/>
            <person name="Polakiewicz R.D."/>
            <person name="Comb M.J."/>
        </authorList>
    </citation>
    <scope>IDENTIFICATION BY MASS SPECTROMETRY [LARGE SCALE ANALYSIS]</scope>
</reference>
<reference key="5">
    <citation type="journal article" date="2007" name="Proc. Natl. Acad. Sci. U.S.A.">
        <title>Large-scale phosphorylation analysis of mouse liver.</title>
        <authorList>
            <person name="Villen J."/>
            <person name="Beausoleil S.A."/>
            <person name="Gerber S.A."/>
            <person name="Gygi S.P."/>
        </authorList>
    </citation>
    <scope>IDENTIFICATION BY MASS SPECTROMETRY [LARGE SCALE ANALYSIS]</scope>
    <source>
        <tissue>Liver</tissue>
    </source>
</reference>
<reference key="6">
    <citation type="journal article" date="2009" name="Mol. Cell. Proteomics">
        <title>Large scale localization of protein phosphorylation by use of electron capture dissociation mass spectrometry.</title>
        <authorList>
            <person name="Sweet S.M."/>
            <person name="Bailey C.M."/>
            <person name="Cunningham D.L."/>
            <person name="Heath J.K."/>
            <person name="Cooper H.J."/>
        </authorList>
    </citation>
    <scope>PHOSPHORYLATION [LARGE SCALE ANALYSIS] AT TYR-483 AND SER-1087</scope>
    <scope>IDENTIFICATION BY MASS SPECTROMETRY [LARGE SCALE ANALYSIS]</scope>
    <source>
        <tissue>Embryonic fibroblast</tissue>
    </source>
</reference>
<reference key="7">
    <citation type="journal article" date="2010" name="Cell">
        <title>A tissue-specific atlas of mouse protein phosphorylation and expression.</title>
        <authorList>
            <person name="Huttlin E.L."/>
            <person name="Jedrychowski M.P."/>
            <person name="Elias J.E."/>
            <person name="Goswami T."/>
            <person name="Rad R."/>
            <person name="Beausoleil S.A."/>
            <person name="Villen J."/>
            <person name="Haas W."/>
            <person name="Sowa M.E."/>
            <person name="Gygi S.P."/>
        </authorList>
    </citation>
    <scope>PHOSPHORYLATION [LARGE SCALE ANALYSIS] AT SER-118; SER-120; SER-455; SER-466; SER-481; TYR-483; SER-830; SER-832; SER-835; THR-909; SER-941; SER-1087 AND SER-1238</scope>
    <scope>IDENTIFICATION BY MASS SPECTROMETRY [LARGE SCALE ANALYSIS]</scope>
    <source>
        <tissue>Brain</tissue>
        <tissue>Brown adipose tissue</tissue>
        <tissue>Heart</tissue>
        <tissue>Kidney</tissue>
        <tissue>Liver</tissue>
        <tissue>Lung</tissue>
        <tissue>Pancreas</tissue>
        <tissue>Spleen</tissue>
        <tissue>Testis</tissue>
    </source>
</reference>
<reference key="8">
    <citation type="journal article" date="2014" name="Mol. Cell. Proteomics">
        <title>Immunoaffinity enrichment and mass spectrometry analysis of protein methylation.</title>
        <authorList>
            <person name="Guo A."/>
            <person name="Gu H."/>
            <person name="Zhou J."/>
            <person name="Mulhern D."/>
            <person name="Wang Y."/>
            <person name="Lee K.A."/>
            <person name="Yang V."/>
            <person name="Aguiar M."/>
            <person name="Kornhauser J."/>
            <person name="Jia X."/>
            <person name="Ren J."/>
            <person name="Beausoleil S.A."/>
            <person name="Silva J.C."/>
            <person name="Vemulapalli V."/>
            <person name="Bedford M.T."/>
            <person name="Comb M.J."/>
        </authorList>
    </citation>
    <scope>METHYLATION [LARGE SCALE ANALYSIS] AT ARG-555</scope>
    <scope>IDENTIFICATION BY MASS SPECTROMETRY [LARGE SCALE ANALYSIS]</scope>
    <source>
        <tissue>Brain</tissue>
        <tissue>Embryo</tissue>
    </source>
</reference>
<reference key="9">
    <citation type="journal article" date="2013" name="Mol. Cell. Biol.">
        <title>C1-Ten is a protein tyrosine phosphatase of insulin receptor substrate 1 (IRS-1), regulating IRS-1 stability and muscle atrophy.</title>
        <authorList>
            <person name="Koh A."/>
            <person name="Lee M.N."/>
            <person name="Yang Y.R."/>
            <person name="Jeong H."/>
            <person name="Ghim J."/>
            <person name="Noh J."/>
            <person name="Kim J."/>
            <person name="Ryu D."/>
            <person name="Park S."/>
            <person name="Song P."/>
            <person name="Koo S.H."/>
            <person name="Leslie N.R."/>
            <person name="Berggren P.O."/>
            <person name="Choi J.H."/>
            <person name="Suh P.G."/>
            <person name="Ryu S.H."/>
        </authorList>
    </citation>
    <scope>TISSUE SPECIFICITY</scope>
    <scope>DEVELOPMENTAL STAGE</scope>
    <scope>INDUCTION</scope>
</reference>
<reference key="10">
    <citation type="journal article" date="2016" name="J. Vet. Med. Sci.">
        <title>Functional validation of tensin2 SH2-PTB domain by CRISPR/Cas9-mediated genome editing.</title>
        <authorList>
            <person name="Marusugi K."/>
            <person name="Nakano K."/>
            <person name="Sasaki H."/>
            <person name="Kimura J."/>
            <person name="Yanobu-Takanashi R."/>
            <person name="Okamura T."/>
            <person name="Sasaki N."/>
        </authorList>
    </citation>
    <scope>FUNCTION</scope>
    <scope>DOMAIN</scope>
</reference>
<reference key="11">
    <citation type="journal article" date="2017" name="Sci. Rep.">
        <title>C1-Ten is a PTPase of nephrin, regulating podocyte hypertrophy through mTORC1 activation.</title>
        <authorList>
            <person name="Lee J."/>
            <person name="Koh A."/>
            <person name="Jeong H."/>
            <person name="Kim E."/>
            <person name="Ha T.S."/>
            <person name="Saleem M.A."/>
            <person name="Ryu S.H."/>
        </authorList>
    </citation>
    <scope>TISSUE SPECIFICITY</scope>
</reference>
<reference key="12">
    <citation type="journal article" date="2020" name="Exp. Anim.">
        <title>Deletion of the Tensin2 SH2-PTB domain, but not the loss of its PTPase activity, induces podocyte injury in FVB/N mouse strain.</title>
        <authorList>
            <person name="Sasaki H."/>
            <person name="Takahashi Y."/>
            <person name="Ogawa T."/>
            <person name="Hiura K."/>
            <person name="Nakano K."/>
            <person name="Sugiyama M."/>
            <person name="Okamura T."/>
            <person name="Sasaki N."/>
        </authorList>
    </citation>
    <scope>FUNCTION</scope>
    <scope>SUBCELLULAR LOCATION</scope>
    <scope>DOMAIN</scope>
    <scope>MUTAGENESIS OF CYS-231</scope>
</reference>
<reference key="13">
    <citation type="journal article" date="2020" name="Am. J. Physiol.">
        <title>Tensin2 is important for podocyte-glomerular basement membrane interaction and integrity of the glomerular filtration barrier.</title>
        <authorList>
            <person name="Uchio-Yamada K."/>
            <person name="Yasuda K."/>
            <person name="Monobe Y."/>
            <person name="Akagi K.I."/>
            <person name="Suzuki O."/>
            <person name="Manabe N."/>
        </authorList>
    </citation>
    <scope>FUNCTION</scope>
    <scope>TISSUE SPECIFICITY</scope>
    <scope>DEVELOPMENTAL STAGE</scope>
    <scope>DISRUPTION PHENOTYPE</scope>
</reference>
<gene>
    <name type="primary">Tns2</name>
    <name type="synonym">Tenc1</name>
</gene>
<comment type="function">
    <text evidence="1 9 11 12">Tyrosine-protein phosphatase which regulates cell motility, proliferation and muscle-response to insulin (By similarity). Phosphatase activity is mediated by binding to phosphatidylinositol-3,4,5-triphosphate (PtdIns(3,4,5)P3) via the SH2 domain (By similarity). In muscles and under catabolic conditions, dephosphorylates IRS1 leading to its degradation and muscle atrophy. Negatively regulates PI3K-AKT pathway activation (By similarity). Dephosphorylates nephrin NPHS1 in podocytes which affects mTORC1 complex activity (By similarity). Under normal glucose conditions, NPHS1 outcompetes IRS1 for binding to phosphatidylinositol 3-kinase (PI3K) which balances mTORC1 activity but high glucose conditions lead to up-regulation of TNS2, increased NPHS1 dephosphorylation and activation of mTORC1, contributing to podocyte hypertrophy and proteinuria (By similarity). Required for correct podocyte morphology, podocyte-glomerular basement membrane interaction and integrity of the glomerular filtration barrier (PubMed:27246398, PubMed:31723089, PubMed:32390516). Enhances RHOA activation in the presence of DLC1 (By similarity). Plays a role in promoting DLC1-dependent remodeling of the extracellular matrix (By similarity).</text>
</comment>
<comment type="catalytic activity">
    <reaction evidence="1">
        <text>O-phospho-L-tyrosyl-[protein] + H2O = L-tyrosyl-[protein] + phosphate</text>
        <dbReference type="Rhea" id="RHEA:10684"/>
        <dbReference type="Rhea" id="RHEA-COMP:10136"/>
        <dbReference type="Rhea" id="RHEA-COMP:20101"/>
        <dbReference type="ChEBI" id="CHEBI:15377"/>
        <dbReference type="ChEBI" id="CHEBI:43474"/>
        <dbReference type="ChEBI" id="CHEBI:46858"/>
        <dbReference type="ChEBI" id="CHEBI:61978"/>
        <dbReference type="EC" id="3.1.3.48"/>
    </reaction>
</comment>
<comment type="subunit">
    <text evidence="1">Interacts with AXL. Interacts with SYK; leading to its phosphorylation. Interacts with SQSTM1 (via PB1 domain); the interaction leads to sequestration of TNS2 in cytoplasmic aggregates with SQSTM1 and promotes TNS2 ubiquitination and proteasomal degradation.</text>
</comment>
<comment type="subcellular location">
    <subcellularLocation>
        <location evidence="11">Cell junction</location>
        <location evidence="11">Focal adhesion</location>
    </subcellularLocation>
    <subcellularLocation>
        <location evidence="1">Cell membrane</location>
        <topology evidence="1">Peripheral membrane protein</topology>
        <orientation evidence="1">Cytoplasmic side</orientation>
    </subcellularLocation>
    <subcellularLocation>
        <location evidence="1">Cytoplasm</location>
    </subcellularLocation>
    <text evidence="1">Detected at the end of actin stress fibers. Detected in cytoplasmic punctate bodies. Localizes to both focal adhesions and fibrillar adhesions but is found mainly in focal adhesions. Enriched in dynamic focal adhesions at the leading edge of the cell and is found only rarely in fibrillar adhesions on the ventral surface of cells.</text>
</comment>
<comment type="alternative products">
    <event type="alternative splicing"/>
    <isoform>
        <id>Q8CGB6-1</id>
        <name>1</name>
        <sequence type="displayed"/>
    </isoform>
    <isoform>
        <id>Q8CGB6-2</id>
        <name>2</name>
        <sequence type="described" ref="VSP_026462"/>
    </isoform>
    <isoform>
        <id>Q8CGB6-3</id>
        <name>3</name>
        <sequence type="described" ref="VSP_026464"/>
    </isoform>
    <isoform>
        <id>Q8CGB6-4</id>
        <name>4</name>
        <sequence type="described" ref="VSP_026463"/>
    </isoform>
</comment>
<comment type="tissue specificity">
    <text evidence="8 10 12">In the adult kidney, expressed mainly in glomeruli (at protein level) (PubMed:28955049). In the newborn kidney, localizes on the basal surface of podocytes along the glomerular basement membrane and not in endothelial cells (PubMed:32390516). Low expression levels in anabolic skeletal muscles (PubMed:23401856).</text>
</comment>
<comment type="developmental stage">
    <text evidence="8 12">In the newborn kidney, weak expression is first observed in podocytes in the late S-shaped body or early capillary loop stage, increases with glomerular maturation and persists at a high level in mature glomeruli (at protein level) (PubMed:32390516). Expressed in skeletal muscle at 17.5 dpc until post natal day P0 and then decreases at P21 (PubMed:23401856).</text>
</comment>
<comment type="induction">
    <text evidence="8">Induced under catabolic conditions in skeletal muscles.</text>
</comment>
<comment type="domain">
    <text evidence="1 9 11 12">The SH3 domain mediates binding to phosphatidylinositol-3,4,5-triphosphate (PtdIns(3,4,5)P3) (By similarity). It is also required to ensure podocyte integrity while the phosphatase domain is dispensible for podocyte maintenance (PubMed:27246398, PubMed:31723089, PubMed:32390516).</text>
</comment>
<comment type="PTM">
    <text evidence="1">Ubiquitinated following sequestration in cytoplasmic aggregates with SQSTM1, leading to proteasomal degradation.</text>
</comment>
<comment type="disruption phenotype">
    <text evidence="12">Glomerular defects during postnatal nephrogenesis including severe glomerular basement membrane (GBM) thickening, effacement of podocyte foot processes, and mesangial expansion and sclerosis (PubMed:32390516). Ectopic expression of laminin LAMA2 in the GBM followed by the accumulation of immature laminin components (PubMed:32390516). Decreased adhesion of podocytes to the GBM (PubMed:32390516).</text>
</comment>
<comment type="similarity">
    <text evidence="16">Belongs to the PTEN phosphatase protein family.</text>
</comment>
<comment type="sequence caution" evidence="16">
    <conflict type="frameshift">
        <sequence resource="EMBL-CDS" id="BAE34316"/>
    </conflict>
</comment>
<evidence type="ECO:0000250" key="1">
    <source>
        <dbReference type="UniProtKB" id="Q63HR2"/>
    </source>
</evidence>
<evidence type="ECO:0000255" key="2"/>
<evidence type="ECO:0000255" key="3">
    <source>
        <dbReference type="PROSITE-ProRule" id="PRU00191"/>
    </source>
</evidence>
<evidence type="ECO:0000255" key="4">
    <source>
        <dbReference type="PROSITE-ProRule" id="PRU00226"/>
    </source>
</evidence>
<evidence type="ECO:0000255" key="5">
    <source>
        <dbReference type="PROSITE-ProRule" id="PRU00589"/>
    </source>
</evidence>
<evidence type="ECO:0000255" key="6">
    <source>
        <dbReference type="PROSITE-ProRule" id="PRU00590"/>
    </source>
</evidence>
<evidence type="ECO:0000256" key="7">
    <source>
        <dbReference type="SAM" id="MobiDB-lite"/>
    </source>
</evidence>
<evidence type="ECO:0000269" key="8">
    <source>
    </source>
</evidence>
<evidence type="ECO:0000269" key="9">
    <source>
    </source>
</evidence>
<evidence type="ECO:0000269" key="10">
    <source>
    </source>
</evidence>
<evidence type="ECO:0000269" key="11">
    <source>
    </source>
</evidence>
<evidence type="ECO:0000269" key="12">
    <source>
    </source>
</evidence>
<evidence type="ECO:0000303" key="13">
    <source>
    </source>
</evidence>
<evidence type="ECO:0000303" key="14">
    <source>
    </source>
</evidence>
<evidence type="ECO:0000303" key="15">
    <source ref="1"/>
</evidence>
<evidence type="ECO:0000305" key="16"/>
<evidence type="ECO:0007744" key="17">
    <source>
    </source>
</evidence>
<evidence type="ECO:0007744" key="18">
    <source>
    </source>
</evidence>
<evidence type="ECO:0007744" key="19">
    <source>
    </source>
</evidence>
<feature type="chain" id="PRO_0000292988" description="Tensin-2">
    <location>
        <begin position="1"/>
        <end position="1400"/>
    </location>
</feature>
<feature type="domain" description="Phosphatase tensin-type" evidence="6">
    <location>
        <begin position="122"/>
        <end position="294"/>
    </location>
</feature>
<feature type="domain" description="C2 tensin-type" evidence="5">
    <location>
        <begin position="299"/>
        <end position="425"/>
    </location>
</feature>
<feature type="domain" description="SH2" evidence="3">
    <location>
        <begin position="1131"/>
        <end position="1238"/>
    </location>
</feature>
<feature type="domain" description="PTB" evidence="2">
    <location>
        <begin position="1266"/>
        <end position="1399"/>
    </location>
</feature>
<feature type="zinc finger region" description="Phorbol-ester/DAG-type" evidence="4">
    <location>
        <begin position="31"/>
        <end position="79"/>
    </location>
</feature>
<feature type="region of interest" description="Disordered" evidence="7">
    <location>
        <begin position="425"/>
        <end position="444"/>
    </location>
</feature>
<feature type="region of interest" description="Disordered" evidence="7">
    <location>
        <begin position="488"/>
        <end position="536"/>
    </location>
</feature>
<feature type="region of interest" description="Disordered" evidence="7">
    <location>
        <begin position="809"/>
        <end position="1114"/>
    </location>
</feature>
<feature type="compositionally biased region" description="Polar residues" evidence="7">
    <location>
        <begin position="433"/>
        <end position="444"/>
    </location>
</feature>
<feature type="compositionally biased region" description="Pro residues" evidence="7">
    <location>
        <begin position="492"/>
        <end position="506"/>
    </location>
</feature>
<feature type="compositionally biased region" description="Polar residues" evidence="7">
    <location>
        <begin position="898"/>
        <end position="917"/>
    </location>
</feature>
<feature type="compositionally biased region" description="Polar residues" evidence="7">
    <location>
        <begin position="929"/>
        <end position="940"/>
    </location>
</feature>
<feature type="compositionally biased region" description="Pro residues" evidence="7">
    <location>
        <begin position="1046"/>
        <end position="1056"/>
    </location>
</feature>
<feature type="compositionally biased region" description="Polar residues" evidence="7">
    <location>
        <begin position="1082"/>
        <end position="1098"/>
    </location>
</feature>
<feature type="active site" description="Phosphocysteine intermediate" evidence="6">
    <location>
        <position position="231"/>
    </location>
</feature>
<feature type="modified residue" description="Phosphothreonine" evidence="1">
    <location>
        <position position="91"/>
    </location>
</feature>
<feature type="modified residue" description="Phosphoserine" evidence="18">
    <location>
        <position position="118"/>
    </location>
</feature>
<feature type="modified residue" description="Phosphoserine" evidence="18">
    <location>
        <position position="120"/>
    </location>
</feature>
<feature type="modified residue" description="Phosphoserine" evidence="18">
    <location>
        <position position="455"/>
    </location>
</feature>
<feature type="modified residue" description="Phosphotyrosine" evidence="1">
    <location>
        <position position="456"/>
    </location>
</feature>
<feature type="modified residue" description="Phosphoserine" evidence="18">
    <location>
        <position position="466"/>
    </location>
</feature>
<feature type="modified residue" description="Phosphothreonine" evidence="1">
    <location>
        <position position="474"/>
    </location>
</feature>
<feature type="modified residue" description="Phosphoserine" evidence="18">
    <location>
        <position position="481"/>
    </location>
</feature>
<feature type="modified residue" description="Phosphotyrosine" evidence="17 18">
    <location>
        <position position="483"/>
    </location>
</feature>
<feature type="modified residue" description="Omega-N-methylarginine" evidence="19">
    <location>
        <position position="555"/>
    </location>
</feature>
<feature type="modified residue" description="Phosphoserine" evidence="1">
    <location>
        <position position="820"/>
    </location>
</feature>
<feature type="modified residue" description="Phosphoserine" evidence="1">
    <location>
        <position position="825"/>
    </location>
</feature>
<feature type="modified residue" description="Phosphoserine" evidence="18">
    <location>
        <position position="830"/>
    </location>
</feature>
<feature type="modified residue" description="Phosphoserine" evidence="18">
    <location>
        <position position="832"/>
    </location>
</feature>
<feature type="modified residue" description="Phosphoserine" evidence="18">
    <location>
        <position position="835"/>
    </location>
</feature>
<feature type="modified residue" description="Phosphothreonine" evidence="18">
    <location>
        <position position="909"/>
    </location>
</feature>
<feature type="modified residue" description="Phosphoserine" evidence="1">
    <location>
        <position position="931"/>
    </location>
</feature>
<feature type="modified residue" description="Phosphoserine" evidence="18">
    <location>
        <position position="941"/>
    </location>
</feature>
<feature type="modified residue" description="Phosphoserine" evidence="1">
    <location>
        <position position="972"/>
    </location>
</feature>
<feature type="modified residue" description="Phosphothreonine" evidence="1">
    <location>
        <position position="977"/>
    </location>
</feature>
<feature type="modified residue" description="Phosphoserine" evidence="1">
    <location>
        <position position="991"/>
    </location>
</feature>
<feature type="modified residue" description="Phosphoserine" evidence="1">
    <location>
        <position position="1003"/>
    </location>
</feature>
<feature type="modified residue" description="Phosphoserine" evidence="17 18">
    <location>
        <position position="1087"/>
    </location>
</feature>
<feature type="modified residue" description="Phosphothreonine" evidence="1">
    <location>
        <position position="1173"/>
    </location>
</feature>
<feature type="modified residue" description="Phosphoserine" evidence="18">
    <location>
        <position position="1238"/>
    </location>
</feature>
<feature type="splice variant" id="VSP_026462" description="In isoform 2." evidence="15">
    <original>MKSSGPVERLLRALGRRDSSRATSR</original>
    <variation>MK</variation>
    <location>
        <begin position="1"/>
        <end position="25"/>
    </location>
</feature>
<feature type="splice variant" id="VSP_026463" description="In isoform 4." evidence="14">
    <original>MKSSGPVERLLRALGRRDSSRATSR</original>
    <variation>MGWSGGAPCCCPSSPRPRPSGRPPQ</variation>
    <location>
        <begin position="1"/>
        <end position="25"/>
    </location>
</feature>
<feature type="splice variant" id="VSP_026464" description="In isoform 3." evidence="13">
    <original>T</original>
    <variation>TELFPPVS</variation>
    <location>
        <position position="872"/>
    </location>
</feature>
<feature type="mutagenesis site" description="No abnormalities in glomerular morphology." evidence="11">
    <original>C</original>
    <variation>S</variation>
    <location>
        <position position="231"/>
    </location>
</feature>
<feature type="sequence conflict" description="In Ref. 3; BAE28139." evidence="16" ref="3">
    <original>D</original>
    <variation>N</variation>
    <location>
        <position position="54"/>
    </location>
</feature>
<feature type="sequence conflict" description="In Ref. 3; BAE28139." evidence="16" ref="3">
    <original>F</original>
    <variation>L</variation>
    <location>
        <position position="195"/>
    </location>
</feature>
<feature type="sequence conflict" description="In Ref. 3; BAE28139." evidence="16" ref="3">
    <original>P</original>
    <variation>H</variation>
    <location>
        <position position="204"/>
    </location>
</feature>
<feature type="sequence conflict" description="In Ref. 1; AAN32753." evidence="16" ref="1">
    <original>HPL</original>
    <variation>NPFVVQE</variation>
    <location>
        <begin position="1112"/>
        <end position="1114"/>
    </location>
</feature>
<organism>
    <name type="scientific">Mus musculus</name>
    <name type="common">Mouse</name>
    <dbReference type="NCBI Taxonomy" id="10090"/>
    <lineage>
        <taxon>Eukaryota</taxon>
        <taxon>Metazoa</taxon>
        <taxon>Chordata</taxon>
        <taxon>Craniata</taxon>
        <taxon>Vertebrata</taxon>
        <taxon>Euteleostomi</taxon>
        <taxon>Mammalia</taxon>
        <taxon>Eutheria</taxon>
        <taxon>Euarchontoglires</taxon>
        <taxon>Glires</taxon>
        <taxon>Rodentia</taxon>
        <taxon>Myomorpha</taxon>
        <taxon>Muroidea</taxon>
        <taxon>Muridae</taxon>
        <taxon>Murinae</taxon>
        <taxon>Mus</taxon>
        <taxon>Mus</taxon>
    </lineage>
</organism>
<accession>Q8CGB6</accession>
<accession>Q3TZ93</accession>
<accession>Q3UGR8</accession>
<accession>Q8CJ95</accession>
<accession>Q8R122</accession>
<keyword id="KW-0025">Alternative splicing</keyword>
<keyword id="KW-0965">Cell junction</keyword>
<keyword id="KW-1003">Cell membrane</keyword>
<keyword id="KW-0963">Cytoplasm</keyword>
<keyword id="KW-0378">Hydrolase</keyword>
<keyword id="KW-0446">Lipid-binding</keyword>
<keyword id="KW-0472">Membrane</keyword>
<keyword id="KW-0479">Metal-binding</keyword>
<keyword id="KW-0488">Methylation</keyword>
<keyword id="KW-0597">Phosphoprotein</keyword>
<keyword id="KW-0904">Protein phosphatase</keyword>
<keyword id="KW-1185">Reference proteome</keyword>
<keyword id="KW-0727">SH2 domain</keyword>
<keyword id="KW-0832">Ubl conjugation</keyword>
<keyword id="KW-0862">Zinc</keyword>
<keyword id="KW-0863">Zinc-finger</keyword>
<proteinExistence type="evidence at protein level"/>
<protein>
    <recommendedName>
        <fullName>Tensin-2</fullName>
        <ecNumber evidence="1">3.1.3.48</ecNumber>
    </recommendedName>
    <alternativeName>
        <fullName>C1 domain-containing phosphatase and tensin homolog</fullName>
        <shortName>C1-TEN</shortName>
    </alternativeName>
    <alternativeName>
        <fullName>Tensin-like C1 domain-containing phosphatase</fullName>
    </alternativeName>
</protein>
<name>TENS2_MOUSE</name>